<sequence>VELTAEEKAAVLALWDKVKEDEVGGEALGRLLVVYPWTQRFFDSFGDLSTPAAVMGNAKVKAHGKKVLHSFGDGVHHLDNLKGTFAALSELHCDKLHVDPENFRLLGNVLVVVLAKHFGKQFTPELQAAYQKVVAGVANALAHKYH</sequence>
<reference key="1">
    <citation type="journal article" date="1982" name="Hoppe-Seyler's Z. Physiol. Chem.">
        <title>The primary structure of the hemoglobin from a white rhinoceros (Ceratotherium simum, perissodactyla): beta 2 Glu.</title>
        <authorList>
            <person name="Mazur G."/>
            <person name="Braunitzer G."/>
            <person name="Wright P.G."/>
        </authorList>
    </citation>
    <scope>PROTEIN SEQUENCE</scope>
</reference>
<gene>
    <name type="primary">HBB</name>
</gene>
<accession>P02066</accession>
<proteinExistence type="evidence at protein level"/>
<dbReference type="PIR" id="A02384">
    <property type="entry name" value="HBRNW"/>
</dbReference>
<dbReference type="SMR" id="P02066"/>
<dbReference type="GO" id="GO:0072562">
    <property type="term" value="C:blood microparticle"/>
    <property type="evidence" value="ECO:0007669"/>
    <property type="project" value="TreeGrafter"/>
</dbReference>
<dbReference type="GO" id="GO:0031838">
    <property type="term" value="C:haptoglobin-hemoglobin complex"/>
    <property type="evidence" value="ECO:0007669"/>
    <property type="project" value="TreeGrafter"/>
</dbReference>
<dbReference type="GO" id="GO:0005833">
    <property type="term" value="C:hemoglobin complex"/>
    <property type="evidence" value="ECO:0007669"/>
    <property type="project" value="InterPro"/>
</dbReference>
<dbReference type="GO" id="GO:0031720">
    <property type="term" value="F:haptoglobin binding"/>
    <property type="evidence" value="ECO:0007669"/>
    <property type="project" value="TreeGrafter"/>
</dbReference>
<dbReference type="GO" id="GO:0020037">
    <property type="term" value="F:heme binding"/>
    <property type="evidence" value="ECO:0007669"/>
    <property type="project" value="InterPro"/>
</dbReference>
<dbReference type="GO" id="GO:0031721">
    <property type="term" value="F:hemoglobin alpha binding"/>
    <property type="evidence" value="ECO:0007669"/>
    <property type="project" value="TreeGrafter"/>
</dbReference>
<dbReference type="GO" id="GO:0046872">
    <property type="term" value="F:metal ion binding"/>
    <property type="evidence" value="ECO:0007669"/>
    <property type="project" value="UniProtKB-KW"/>
</dbReference>
<dbReference type="GO" id="GO:0043177">
    <property type="term" value="F:organic acid binding"/>
    <property type="evidence" value="ECO:0007669"/>
    <property type="project" value="TreeGrafter"/>
</dbReference>
<dbReference type="GO" id="GO:0019825">
    <property type="term" value="F:oxygen binding"/>
    <property type="evidence" value="ECO:0007669"/>
    <property type="project" value="InterPro"/>
</dbReference>
<dbReference type="GO" id="GO:0005344">
    <property type="term" value="F:oxygen carrier activity"/>
    <property type="evidence" value="ECO:0007669"/>
    <property type="project" value="UniProtKB-KW"/>
</dbReference>
<dbReference type="GO" id="GO:0004601">
    <property type="term" value="F:peroxidase activity"/>
    <property type="evidence" value="ECO:0007669"/>
    <property type="project" value="TreeGrafter"/>
</dbReference>
<dbReference type="GO" id="GO:0042744">
    <property type="term" value="P:hydrogen peroxide catabolic process"/>
    <property type="evidence" value="ECO:0007669"/>
    <property type="project" value="TreeGrafter"/>
</dbReference>
<dbReference type="CDD" id="cd08925">
    <property type="entry name" value="Hb-beta-like"/>
    <property type="match status" value="1"/>
</dbReference>
<dbReference type="FunFam" id="1.10.490.10:FF:000001">
    <property type="entry name" value="Hemoglobin subunit beta"/>
    <property type="match status" value="1"/>
</dbReference>
<dbReference type="Gene3D" id="1.10.490.10">
    <property type="entry name" value="Globins"/>
    <property type="match status" value="1"/>
</dbReference>
<dbReference type="InterPro" id="IPR000971">
    <property type="entry name" value="Globin"/>
</dbReference>
<dbReference type="InterPro" id="IPR009050">
    <property type="entry name" value="Globin-like_sf"/>
</dbReference>
<dbReference type="InterPro" id="IPR012292">
    <property type="entry name" value="Globin/Proto"/>
</dbReference>
<dbReference type="InterPro" id="IPR002337">
    <property type="entry name" value="Hemoglobin_b"/>
</dbReference>
<dbReference type="InterPro" id="IPR050056">
    <property type="entry name" value="Hemoglobin_oxygen_transport"/>
</dbReference>
<dbReference type="PANTHER" id="PTHR11442">
    <property type="entry name" value="HEMOGLOBIN FAMILY MEMBER"/>
    <property type="match status" value="1"/>
</dbReference>
<dbReference type="PANTHER" id="PTHR11442:SF42">
    <property type="entry name" value="HEMOGLOBIN SUBUNIT BETA"/>
    <property type="match status" value="1"/>
</dbReference>
<dbReference type="Pfam" id="PF00042">
    <property type="entry name" value="Globin"/>
    <property type="match status" value="1"/>
</dbReference>
<dbReference type="PRINTS" id="PR00814">
    <property type="entry name" value="BETAHAEM"/>
</dbReference>
<dbReference type="SUPFAM" id="SSF46458">
    <property type="entry name" value="Globin-like"/>
    <property type="match status" value="1"/>
</dbReference>
<dbReference type="PROSITE" id="PS01033">
    <property type="entry name" value="GLOBIN"/>
    <property type="match status" value="1"/>
</dbReference>
<comment type="function">
    <text>Involved in oxygen transport from the lung to the various peripheral tissues.</text>
</comment>
<comment type="subunit">
    <text>Heterotetramer of two alpha chains and two beta chains.</text>
</comment>
<comment type="tissue specificity">
    <text>Red blood cells.</text>
</comment>
<comment type="miscellaneous">
    <text>The variants found in this sample from a single animal suggest the presence of at least two beta chain loci.</text>
</comment>
<comment type="similarity">
    <text evidence="3">Belongs to the globin family.</text>
</comment>
<name>HBB_CERSI</name>
<organism>
    <name type="scientific">Ceratotherium simum</name>
    <name type="common">White rhinoceros</name>
    <name type="synonym">Square-lipped rhinoceros</name>
    <dbReference type="NCBI Taxonomy" id="9807"/>
    <lineage>
        <taxon>Eukaryota</taxon>
        <taxon>Metazoa</taxon>
        <taxon>Chordata</taxon>
        <taxon>Craniata</taxon>
        <taxon>Vertebrata</taxon>
        <taxon>Euteleostomi</taxon>
        <taxon>Mammalia</taxon>
        <taxon>Eutheria</taxon>
        <taxon>Laurasiatheria</taxon>
        <taxon>Perissodactyla</taxon>
        <taxon>Rhinocerotidae</taxon>
        <taxon>Ceratotherium</taxon>
    </lineage>
</organism>
<keyword id="KW-0007">Acetylation</keyword>
<keyword id="KW-0903">Direct protein sequencing</keyword>
<keyword id="KW-0349">Heme</keyword>
<keyword id="KW-0408">Iron</keyword>
<keyword id="KW-0479">Metal-binding</keyword>
<keyword id="KW-0561">Oxygen transport</keyword>
<keyword id="KW-0597">Phosphoprotein</keyword>
<keyword id="KW-0702">S-nitrosylation</keyword>
<keyword id="KW-0813">Transport</keyword>
<protein>
    <recommendedName>
        <fullName>Hemoglobin subunit beta</fullName>
    </recommendedName>
    <alternativeName>
        <fullName>Beta-globin</fullName>
    </alternativeName>
    <alternativeName>
        <fullName>Hemoglobin beta chain</fullName>
    </alternativeName>
</protein>
<feature type="chain" id="PRO_0000052920" description="Hemoglobin subunit beta">
    <location>
        <begin position="1"/>
        <end position="146"/>
    </location>
</feature>
<feature type="domain" description="Globin" evidence="3">
    <location>
        <begin position="2"/>
        <end position="146"/>
    </location>
</feature>
<feature type="binding site" description="distal binding residue">
    <location>
        <position position="63"/>
    </location>
    <ligand>
        <name>heme b</name>
        <dbReference type="ChEBI" id="CHEBI:60344"/>
    </ligand>
    <ligandPart>
        <name>Fe</name>
        <dbReference type="ChEBI" id="CHEBI:18248"/>
    </ligandPart>
</feature>
<feature type="binding site" description="proximal binding residue">
    <location>
        <position position="92"/>
    </location>
    <ligand>
        <name>heme b</name>
        <dbReference type="ChEBI" id="CHEBI:60344"/>
    </ligand>
    <ligandPart>
        <name>Fe</name>
        <dbReference type="ChEBI" id="CHEBI:18248"/>
    </ligandPart>
</feature>
<feature type="modified residue" description="N-acetylvaline" evidence="1">
    <location>
        <position position="1"/>
    </location>
</feature>
<feature type="modified residue" description="Phosphoserine" evidence="2">
    <location>
        <position position="44"/>
    </location>
</feature>
<feature type="modified residue" description="N6-acetyllysine" evidence="2">
    <location>
        <position position="59"/>
    </location>
</feature>
<feature type="modified residue" description="N6-acetyllysine" evidence="2">
    <location>
        <position position="82"/>
    </location>
</feature>
<feature type="modified residue" description="S-nitrosocysteine" evidence="2">
    <location>
        <position position="93"/>
    </location>
</feature>
<feature type="modified residue" description="N6-acetyllysine" evidence="2">
    <location>
        <position position="144"/>
    </location>
</feature>
<feature type="sequence variant">
    <original>A</original>
    <variation>S</variation>
    <location>
        <position position="62"/>
    </location>
</feature>
<feature type="sequence variant">
    <original>A</original>
    <variation>T</variation>
    <location>
        <position position="62"/>
    </location>
</feature>
<feature type="sequence variant">
    <original>K</original>
    <variation>Q</variation>
    <location>
        <position position="116"/>
    </location>
</feature>
<evidence type="ECO:0000250" key="1">
    <source>
        <dbReference type="UniProtKB" id="P02086"/>
    </source>
</evidence>
<evidence type="ECO:0000250" key="2">
    <source>
        <dbReference type="UniProtKB" id="P68871"/>
    </source>
</evidence>
<evidence type="ECO:0000255" key="3">
    <source>
        <dbReference type="PROSITE-ProRule" id="PRU00238"/>
    </source>
</evidence>